<gene>
    <name type="primary">Pbx3</name>
</gene>
<sequence length="434" mass="47204">MDDQSRMLQTLAGVNLAGHSVQGGMALPPPPHGHEGADGDGRKQDIGDILHQIMTITDQSLDEAQAKKHALNCHRMKPALFSVLCEIKEKTGLSIRGAQEEDPPDPQLMRLDNMLLAEGVSGPEKGGGSAAAAAAAAASGGSSDNSIEHSDYRAKLTQIRQIYHTELEKYEQACNEFTTHVMNLLREQSRTRPISPKEIERMVGIIHRKFSSIQMQLKQSTCEAVMILRSRFLDARRKRRNFSKQATEILNEYFYSHLSNPYPSEEAKEELAKKCSITVSQVSNWFGNKRIRYKKNIGKFQEEANLYAAKTAVTAAHAVAAAVQNNQTNSPTTPNSGSSGSFNLPNSGDMFMNMQSLNGDSYQGSQVGANVQSQVDTLRHVINQTGGYSDGLGANSLYSPHNLNANGGWQDATTPSSVTSPTEGPGSVHSDTSN</sequence>
<proteinExistence type="evidence at protein level"/>
<reference key="1">
    <citation type="submission" date="1997-08" db="EMBL/GenBank/DDBJ databases">
        <authorList>
            <person name="Liu Y."/>
            <person name="MacDonald R.J."/>
        </authorList>
    </citation>
    <scope>NUCLEOTIDE SEQUENCE [MRNA] (ISOFORMS PBX3A AND PBX3B)</scope>
</reference>
<reference key="2">
    <citation type="journal article" date="2004" name="Genome Res.">
        <title>The status, quality, and expansion of the NIH full-length cDNA project: the Mammalian Gene Collection (MGC).</title>
        <authorList>
            <consortium name="The MGC Project Team"/>
        </authorList>
    </citation>
    <scope>NUCLEOTIDE SEQUENCE [LARGE SCALE MRNA] (ISOFORM PBX3A)</scope>
    <source>
        <strain>NMRI</strain>
        <tissue>Mammary tumor</tissue>
    </source>
</reference>
<comment type="function">
    <text evidence="1">Transcriptional activator that binds the sequence 5'-ATCAATCAA-3'.</text>
</comment>
<comment type="subunit">
    <text evidence="1">Interacts with PBXIP1.</text>
</comment>
<comment type="interaction">
    <interactant intactId="EBI-26671189">
        <id>O35317</id>
    </interactant>
    <interactant intactId="EBI-26671239">
        <id>P09079</id>
        <label>Hoxb5</label>
    </interactant>
    <organismsDiffer>false</organismsDiffer>
    <experiments>2</experiments>
</comment>
<comment type="subcellular location">
    <subcellularLocation>
        <location evidence="2">Nucleus</location>
    </subcellularLocation>
</comment>
<comment type="alternative products">
    <event type="alternative splicing"/>
    <isoform>
        <id>O35317-1</id>
        <name>PBX3a</name>
        <sequence type="displayed"/>
    </isoform>
    <isoform>
        <id>O35317-2</id>
        <name>PBX3b</name>
        <sequence type="described" ref="VSP_008615 VSP_008616"/>
    </isoform>
</comment>
<comment type="similarity">
    <text evidence="6">Belongs to the TALE/PBX homeobox family.</text>
</comment>
<dbReference type="EMBL" id="AF020199">
    <property type="protein sequence ID" value="AAB71194.1"/>
    <property type="molecule type" value="mRNA"/>
</dbReference>
<dbReference type="EMBL" id="AF020200">
    <property type="protein sequence ID" value="AAB71195.1"/>
    <property type="molecule type" value="mRNA"/>
</dbReference>
<dbReference type="EMBL" id="BC057879">
    <property type="protein sequence ID" value="AAH57879.1"/>
    <property type="molecule type" value="mRNA"/>
</dbReference>
<dbReference type="CCDS" id="CCDS15947.1">
    <molecule id="O35317-1"/>
</dbReference>
<dbReference type="CCDS" id="CCDS71033.1">
    <molecule id="O35317-2"/>
</dbReference>
<dbReference type="RefSeq" id="NP_001277505.1">
    <molecule id="O35317-2"/>
    <property type="nucleotide sequence ID" value="NM_001290576.2"/>
</dbReference>
<dbReference type="RefSeq" id="NP_058048.1">
    <molecule id="O35317-1"/>
    <property type="nucleotide sequence ID" value="NM_016768.3"/>
</dbReference>
<dbReference type="SMR" id="O35317"/>
<dbReference type="BioGRID" id="202039">
    <property type="interactions" value="16"/>
</dbReference>
<dbReference type="CORUM" id="O35317"/>
<dbReference type="FunCoup" id="O35317">
    <property type="interactions" value="2647"/>
</dbReference>
<dbReference type="IntAct" id="O35317">
    <property type="interactions" value="16"/>
</dbReference>
<dbReference type="STRING" id="10090.ENSMUSP00000045281"/>
<dbReference type="iPTMnet" id="O35317"/>
<dbReference type="PhosphoSitePlus" id="O35317"/>
<dbReference type="PaxDb" id="10090-ENSMUSP00000045281"/>
<dbReference type="PeptideAtlas" id="O35317"/>
<dbReference type="ProteomicsDB" id="294022">
    <molecule id="O35317-1"/>
</dbReference>
<dbReference type="ProteomicsDB" id="294023">
    <molecule id="O35317-2"/>
</dbReference>
<dbReference type="Pumba" id="O35317"/>
<dbReference type="Antibodypedia" id="16509">
    <property type="antibodies" value="214 antibodies from 27 providers"/>
</dbReference>
<dbReference type="DNASU" id="18516"/>
<dbReference type="Ensembl" id="ENSMUST00000040638.15">
    <molecule id="O35317-1"/>
    <property type="protein sequence ID" value="ENSMUSP00000045281.8"/>
    <property type="gene ID" value="ENSMUSG00000038718.16"/>
</dbReference>
<dbReference type="Ensembl" id="ENSMUST00000113132.9">
    <molecule id="O35317-2"/>
    <property type="protein sequence ID" value="ENSMUSP00000108757.3"/>
    <property type="gene ID" value="ENSMUSG00000038718.16"/>
</dbReference>
<dbReference type="GeneID" id="18516"/>
<dbReference type="KEGG" id="mmu:18516"/>
<dbReference type="UCSC" id="uc008jih.2">
    <molecule id="O35317-1"/>
    <property type="organism name" value="mouse"/>
</dbReference>
<dbReference type="UCSC" id="uc008jii.2">
    <molecule id="O35317-2"/>
    <property type="organism name" value="mouse"/>
</dbReference>
<dbReference type="AGR" id="MGI:97496"/>
<dbReference type="CTD" id="5090"/>
<dbReference type="MGI" id="MGI:97496">
    <property type="gene designation" value="Pbx3"/>
</dbReference>
<dbReference type="VEuPathDB" id="HostDB:ENSMUSG00000038718"/>
<dbReference type="eggNOG" id="KOG0774">
    <property type="taxonomic scope" value="Eukaryota"/>
</dbReference>
<dbReference type="GeneTree" id="ENSGT00940000154374"/>
<dbReference type="HOGENOM" id="CLU_041153_1_0_1"/>
<dbReference type="InParanoid" id="O35317"/>
<dbReference type="OMA" id="SITVSQX"/>
<dbReference type="OrthoDB" id="4187154at2759"/>
<dbReference type="PhylomeDB" id="O35317"/>
<dbReference type="TreeFam" id="TF314340"/>
<dbReference type="BioGRID-ORCS" id="18516">
    <property type="hits" value="2 hits in 77 CRISPR screens"/>
</dbReference>
<dbReference type="ChiTaRS" id="Pbx3">
    <property type="organism name" value="mouse"/>
</dbReference>
<dbReference type="PRO" id="PR:O35317"/>
<dbReference type="Proteomes" id="UP000000589">
    <property type="component" value="Chromosome 2"/>
</dbReference>
<dbReference type="RNAct" id="O35317">
    <property type="molecule type" value="protein"/>
</dbReference>
<dbReference type="Bgee" id="ENSMUSG00000038718">
    <property type="expression patterns" value="Expressed in rostral migratory stream and 292 other cell types or tissues"/>
</dbReference>
<dbReference type="ExpressionAtlas" id="O35317">
    <property type="expression patterns" value="baseline and differential"/>
</dbReference>
<dbReference type="GO" id="GO:0005634">
    <property type="term" value="C:nucleus"/>
    <property type="evidence" value="ECO:0000314"/>
    <property type="project" value="MGI"/>
</dbReference>
<dbReference type="GO" id="GO:0005667">
    <property type="term" value="C:transcription regulator complex"/>
    <property type="evidence" value="ECO:0000314"/>
    <property type="project" value="MGI"/>
</dbReference>
<dbReference type="GO" id="GO:0001228">
    <property type="term" value="F:DNA-binding transcription activator activity, RNA polymerase II-specific"/>
    <property type="evidence" value="ECO:0000314"/>
    <property type="project" value="NTNU_SB"/>
</dbReference>
<dbReference type="GO" id="GO:0000978">
    <property type="term" value="F:RNA polymerase II cis-regulatory region sequence-specific DNA binding"/>
    <property type="evidence" value="ECO:0000314"/>
    <property type="project" value="NTNU_SB"/>
</dbReference>
<dbReference type="GO" id="GO:0043565">
    <property type="term" value="F:sequence-specific DNA binding"/>
    <property type="evidence" value="ECO:0000314"/>
    <property type="project" value="MGI"/>
</dbReference>
<dbReference type="GO" id="GO:0008344">
    <property type="term" value="P:adult locomotory behavior"/>
    <property type="evidence" value="ECO:0000315"/>
    <property type="project" value="MGI"/>
</dbReference>
<dbReference type="GO" id="GO:0021516">
    <property type="term" value="P:dorsal spinal cord development"/>
    <property type="evidence" value="ECO:0000315"/>
    <property type="project" value="MGI"/>
</dbReference>
<dbReference type="GO" id="GO:0048666">
    <property type="term" value="P:neuron development"/>
    <property type="evidence" value="ECO:0000315"/>
    <property type="project" value="MGI"/>
</dbReference>
<dbReference type="GO" id="GO:0045944">
    <property type="term" value="P:positive regulation of transcription by RNA polymerase II"/>
    <property type="evidence" value="ECO:0000314"/>
    <property type="project" value="NTNU_SB"/>
</dbReference>
<dbReference type="GO" id="GO:0002087">
    <property type="term" value="P:regulation of respiratory gaseous exchange by nervous system process"/>
    <property type="evidence" value="ECO:0000315"/>
    <property type="project" value="MGI"/>
</dbReference>
<dbReference type="GO" id="GO:0007585">
    <property type="term" value="P:respiratory gaseous exchange by respiratory system"/>
    <property type="evidence" value="ECO:0000315"/>
    <property type="project" value="MGI"/>
</dbReference>
<dbReference type="CDD" id="cd00086">
    <property type="entry name" value="homeodomain"/>
    <property type="match status" value="1"/>
</dbReference>
<dbReference type="FunFam" id="1.10.10.60:FF:000008">
    <property type="entry name" value="Pre-B-cell leukemia transcription factor 1"/>
    <property type="match status" value="1"/>
</dbReference>
<dbReference type="Gene3D" id="1.10.10.60">
    <property type="entry name" value="Homeodomain-like"/>
    <property type="match status" value="1"/>
</dbReference>
<dbReference type="InterPro" id="IPR001356">
    <property type="entry name" value="HD"/>
</dbReference>
<dbReference type="InterPro" id="IPR017970">
    <property type="entry name" value="Homeobox_CS"/>
</dbReference>
<dbReference type="InterPro" id="IPR009057">
    <property type="entry name" value="Homeodomain-like_sf"/>
</dbReference>
<dbReference type="InterPro" id="IPR008422">
    <property type="entry name" value="KN_HD"/>
</dbReference>
<dbReference type="InterPro" id="IPR005542">
    <property type="entry name" value="PBX_PBC_dom"/>
</dbReference>
<dbReference type="InterPro" id="IPR050224">
    <property type="entry name" value="TALE_homeobox"/>
</dbReference>
<dbReference type="PANTHER" id="PTHR11850">
    <property type="entry name" value="HOMEOBOX PROTEIN TRANSCRIPTION FACTORS"/>
    <property type="match status" value="1"/>
</dbReference>
<dbReference type="Pfam" id="PF05920">
    <property type="entry name" value="Homeobox_KN"/>
    <property type="match status" value="1"/>
</dbReference>
<dbReference type="Pfam" id="PF03792">
    <property type="entry name" value="PBC"/>
    <property type="match status" value="1"/>
</dbReference>
<dbReference type="SMART" id="SM00389">
    <property type="entry name" value="HOX"/>
    <property type="match status" value="1"/>
</dbReference>
<dbReference type="SUPFAM" id="SSF46689">
    <property type="entry name" value="Homeodomain-like"/>
    <property type="match status" value="1"/>
</dbReference>
<dbReference type="PROSITE" id="PS00027">
    <property type="entry name" value="HOMEOBOX_1"/>
    <property type="match status" value="1"/>
</dbReference>
<dbReference type="PROSITE" id="PS50071">
    <property type="entry name" value="HOMEOBOX_2"/>
    <property type="match status" value="1"/>
</dbReference>
<dbReference type="PROSITE" id="PS51978">
    <property type="entry name" value="PBC"/>
    <property type="match status" value="1"/>
</dbReference>
<feature type="chain" id="PRO_0000049240" description="Pre-B-cell leukemia transcription factor 3">
    <location>
        <begin position="1"/>
        <end position="434"/>
    </location>
</feature>
<feature type="domain" description="PBC" evidence="3">
    <location>
        <begin position="41"/>
        <end position="234"/>
    </location>
</feature>
<feature type="DNA-binding region" description="Homeobox; TALE-type" evidence="2">
    <location>
        <begin position="235"/>
        <end position="297"/>
    </location>
</feature>
<feature type="region of interest" description="Disordered" evidence="4">
    <location>
        <begin position="20"/>
        <end position="41"/>
    </location>
</feature>
<feature type="region of interest" description="PBC-A" evidence="3">
    <location>
        <begin position="48"/>
        <end position="127"/>
    </location>
</feature>
<feature type="region of interest" description="PBC-B" evidence="3">
    <location>
        <begin position="130"/>
        <end position="234"/>
    </location>
</feature>
<feature type="region of interest" description="Disordered" evidence="4">
    <location>
        <begin position="326"/>
        <end position="349"/>
    </location>
</feature>
<feature type="region of interest" description="Disordered" evidence="4">
    <location>
        <begin position="405"/>
        <end position="434"/>
    </location>
</feature>
<feature type="compositionally biased region" description="Basic and acidic residues" evidence="4">
    <location>
        <begin position="32"/>
        <end position="41"/>
    </location>
</feature>
<feature type="compositionally biased region" description="Low complexity" evidence="4">
    <location>
        <begin position="326"/>
        <end position="341"/>
    </location>
</feature>
<feature type="compositionally biased region" description="Polar residues" evidence="4">
    <location>
        <begin position="405"/>
        <end position="422"/>
    </location>
</feature>
<feature type="splice variant" id="VSP_008615" description="In isoform PBX3b." evidence="5">
    <original>SSGSFNLPNSGDMF</original>
    <variation>GYPPSCYQSDGRLQ</variation>
    <location>
        <begin position="338"/>
        <end position="351"/>
    </location>
</feature>
<feature type="splice variant" id="VSP_008616" description="In isoform PBX3b." evidence="5">
    <location>
        <begin position="352"/>
        <end position="434"/>
    </location>
</feature>
<organism>
    <name type="scientific">Mus musculus</name>
    <name type="common">Mouse</name>
    <dbReference type="NCBI Taxonomy" id="10090"/>
    <lineage>
        <taxon>Eukaryota</taxon>
        <taxon>Metazoa</taxon>
        <taxon>Chordata</taxon>
        <taxon>Craniata</taxon>
        <taxon>Vertebrata</taxon>
        <taxon>Euteleostomi</taxon>
        <taxon>Mammalia</taxon>
        <taxon>Eutheria</taxon>
        <taxon>Euarchontoglires</taxon>
        <taxon>Glires</taxon>
        <taxon>Rodentia</taxon>
        <taxon>Myomorpha</taxon>
        <taxon>Muroidea</taxon>
        <taxon>Muridae</taxon>
        <taxon>Murinae</taxon>
        <taxon>Mus</taxon>
        <taxon>Mus</taxon>
    </lineage>
</organism>
<protein>
    <recommendedName>
        <fullName>Pre-B-cell leukemia transcription factor 3</fullName>
    </recommendedName>
    <alternativeName>
        <fullName>Homeobox protein PBX3</fullName>
    </alternativeName>
</protein>
<accession>O35317</accession>
<accession>Q925W2</accession>
<name>PBX3_MOUSE</name>
<keyword id="KW-0010">Activator</keyword>
<keyword id="KW-0025">Alternative splicing</keyword>
<keyword id="KW-0238">DNA-binding</keyword>
<keyword id="KW-0371">Homeobox</keyword>
<keyword id="KW-0539">Nucleus</keyword>
<keyword id="KW-1185">Reference proteome</keyword>
<keyword id="KW-0804">Transcription</keyword>
<keyword id="KW-0805">Transcription regulation</keyword>
<evidence type="ECO:0000250" key="1"/>
<evidence type="ECO:0000255" key="2">
    <source>
        <dbReference type="PROSITE-ProRule" id="PRU00108"/>
    </source>
</evidence>
<evidence type="ECO:0000255" key="3">
    <source>
        <dbReference type="PROSITE-ProRule" id="PRU01322"/>
    </source>
</evidence>
<evidence type="ECO:0000256" key="4">
    <source>
        <dbReference type="SAM" id="MobiDB-lite"/>
    </source>
</evidence>
<evidence type="ECO:0000303" key="5">
    <source ref="1"/>
</evidence>
<evidence type="ECO:0000305" key="6"/>